<dbReference type="EMBL" id="AF219138">
    <property type="protein sequence ID" value="AAF42848.1"/>
    <property type="molecule type" value="mRNA"/>
</dbReference>
<dbReference type="EMBL" id="AF190864">
    <property type="protein sequence ID" value="AAF05709.1"/>
    <property type="molecule type" value="mRNA"/>
</dbReference>
<dbReference type="EMBL" id="AF219139">
    <property type="protein sequence ID" value="AAF42849.1"/>
    <property type="molecule type" value="mRNA"/>
</dbReference>
<dbReference type="EMBL" id="D63876">
    <property type="protein sequence ID" value="BAA09926.1"/>
    <property type="status" value="ALT_INIT"/>
    <property type="molecule type" value="mRNA"/>
</dbReference>
<dbReference type="EMBL" id="AK301895">
    <property type="protein sequence ID" value="BAH13578.1"/>
    <property type="molecule type" value="mRNA"/>
</dbReference>
<dbReference type="EMBL" id="AK302278">
    <property type="protein sequence ID" value="BAH13665.1"/>
    <property type="molecule type" value="mRNA"/>
</dbReference>
<dbReference type="EMBL" id="AC022211">
    <property type="status" value="NOT_ANNOTATED_CDS"/>
    <property type="molecule type" value="Genomic_DNA"/>
</dbReference>
<dbReference type="EMBL" id="CH471099">
    <property type="protein sequence ID" value="EAW89258.1"/>
    <property type="molecule type" value="Genomic_DNA"/>
</dbReference>
<dbReference type="EMBL" id="BC070044">
    <property type="protein sequence ID" value="AAH70044.1"/>
    <property type="molecule type" value="mRNA"/>
</dbReference>
<dbReference type="CCDS" id="CCDS11716.1">
    <molecule id="Q9NZ52-2"/>
</dbReference>
<dbReference type="CCDS" id="CCDS11717.1">
    <molecule id="Q9NZ52-1"/>
</dbReference>
<dbReference type="CCDS" id="CCDS54164.1">
    <molecule id="Q9NZ52-4"/>
</dbReference>
<dbReference type="CCDS" id="CCDS58597.1">
    <molecule id="Q9NZ52-3"/>
</dbReference>
<dbReference type="RefSeq" id="NP_001166174.1">
    <molecule id="Q9NZ52-4"/>
    <property type="nucleotide sequence ID" value="NM_001172703.3"/>
</dbReference>
<dbReference type="RefSeq" id="NP_001166175.1">
    <molecule id="Q9NZ52-3"/>
    <property type="nucleotide sequence ID" value="NM_001172704.3"/>
</dbReference>
<dbReference type="RefSeq" id="NP_001278570.1">
    <molecule id="Q9NZ52-4"/>
    <property type="nucleotide sequence ID" value="NM_001291641.2"/>
</dbReference>
<dbReference type="RefSeq" id="NP_001278571.1">
    <property type="nucleotide sequence ID" value="NM_001291642.1"/>
</dbReference>
<dbReference type="RefSeq" id="NP_054720.1">
    <molecule id="Q9NZ52-2"/>
    <property type="nucleotide sequence ID" value="NM_014001.5"/>
</dbReference>
<dbReference type="RefSeq" id="NP_619525.1">
    <molecule id="Q9NZ52-1"/>
    <property type="nucleotide sequence ID" value="NM_138619.4"/>
</dbReference>
<dbReference type="PDB" id="1JPL">
    <property type="method" value="X-ray"/>
    <property type="resolution" value="2.40 A"/>
    <property type="chains" value="A/B/C/D=1-166"/>
</dbReference>
<dbReference type="PDB" id="1JUQ">
    <property type="method" value="X-ray"/>
    <property type="resolution" value="2.20 A"/>
    <property type="chains" value="A/B/C/D=1-166"/>
</dbReference>
<dbReference type="PDB" id="1LF8">
    <property type="method" value="X-ray"/>
    <property type="resolution" value="2.30 A"/>
    <property type="chains" value="A/B/C/D=1-166"/>
</dbReference>
<dbReference type="PDB" id="1P4U">
    <property type="method" value="X-ray"/>
    <property type="resolution" value="2.20 A"/>
    <property type="chains" value="A=571-723"/>
</dbReference>
<dbReference type="PDB" id="1WR6">
    <property type="method" value="X-ray"/>
    <property type="resolution" value="2.60 A"/>
    <property type="chains" value="A/B/C/D=209-319"/>
</dbReference>
<dbReference type="PDB" id="1YD8">
    <property type="method" value="X-ray"/>
    <property type="resolution" value="2.80 A"/>
    <property type="chains" value="G/H=208-301"/>
</dbReference>
<dbReference type="PDBsum" id="1JPL"/>
<dbReference type="PDBsum" id="1JUQ"/>
<dbReference type="PDBsum" id="1LF8"/>
<dbReference type="PDBsum" id="1P4U"/>
<dbReference type="PDBsum" id="1WR6"/>
<dbReference type="PDBsum" id="1YD8"/>
<dbReference type="SMR" id="Q9NZ52"/>
<dbReference type="BioGRID" id="116775">
    <property type="interactions" value="118"/>
</dbReference>
<dbReference type="CORUM" id="Q9NZ52"/>
<dbReference type="DIP" id="DIP-31600N"/>
<dbReference type="ELM" id="Q9NZ52"/>
<dbReference type="FunCoup" id="Q9NZ52">
    <property type="interactions" value="1957"/>
</dbReference>
<dbReference type="IntAct" id="Q9NZ52">
    <property type="interactions" value="64"/>
</dbReference>
<dbReference type="MINT" id="Q9NZ52"/>
<dbReference type="STRING" id="9606.ENSP00000438085"/>
<dbReference type="TCDB" id="9.B.278.1.3">
    <property type="family name" value="the organellar-targeting adaptor protein complex (o-apc) family"/>
</dbReference>
<dbReference type="GlyCosmos" id="Q9NZ52">
    <property type="glycosylation" value="4 sites, 1 glycan"/>
</dbReference>
<dbReference type="GlyGen" id="Q9NZ52">
    <property type="glycosylation" value="5 sites, 1 O-linked glycan (4 sites)"/>
</dbReference>
<dbReference type="iPTMnet" id="Q9NZ52"/>
<dbReference type="PhosphoSitePlus" id="Q9NZ52"/>
<dbReference type="BioMuta" id="GGA3"/>
<dbReference type="DMDM" id="14548064"/>
<dbReference type="jPOST" id="Q9NZ52"/>
<dbReference type="MassIVE" id="Q9NZ52"/>
<dbReference type="PaxDb" id="9606-ENSP00000438085"/>
<dbReference type="PeptideAtlas" id="Q9NZ52"/>
<dbReference type="ProteomicsDB" id="83324">
    <molecule id="Q9NZ52-1"/>
</dbReference>
<dbReference type="ProteomicsDB" id="83325">
    <molecule id="Q9NZ52-2"/>
</dbReference>
<dbReference type="Pumba" id="Q9NZ52"/>
<dbReference type="Antibodypedia" id="19520">
    <property type="antibodies" value="196 antibodies from 32 providers"/>
</dbReference>
<dbReference type="DNASU" id="23163"/>
<dbReference type="Ensembl" id="ENST00000537686.6">
    <molecule id="Q9NZ52-1"/>
    <property type="protein sequence ID" value="ENSP00000438085.3"/>
    <property type="gene ID" value="ENSG00000125447.18"/>
</dbReference>
<dbReference type="Ensembl" id="ENST00000538886.5">
    <molecule id="Q9NZ52-2"/>
    <property type="protein sequence ID" value="ENSP00000446421.2"/>
    <property type="gene ID" value="ENSG00000125447.18"/>
</dbReference>
<dbReference type="Ensembl" id="ENST00000578348.5">
    <molecule id="Q9NZ52-3"/>
    <property type="protein sequence ID" value="ENSP00000463288.1"/>
    <property type="gene ID" value="ENSG00000125447.18"/>
</dbReference>
<dbReference type="Ensembl" id="ENST00000582717.5">
    <molecule id="Q9NZ52-4"/>
    <property type="protein sequence ID" value="ENSP00000462081.1"/>
    <property type="gene ID" value="ENSG00000125447.18"/>
</dbReference>
<dbReference type="Ensembl" id="ENST00000649398.1">
    <molecule id="Q9NZ52-1"/>
    <property type="protein sequence ID" value="ENSP00000496890.1"/>
    <property type="gene ID" value="ENSG00000125447.18"/>
</dbReference>
<dbReference type="GeneID" id="23163"/>
<dbReference type="KEGG" id="hsa:23163"/>
<dbReference type="MANE-Select" id="ENST00000537686.6">
    <property type="protein sequence ID" value="ENSP00000438085.3"/>
    <property type="RefSeq nucleotide sequence ID" value="NM_138619.4"/>
    <property type="RefSeq protein sequence ID" value="NP_619525.1"/>
</dbReference>
<dbReference type="UCSC" id="uc010wrw.3">
    <molecule id="Q9NZ52-1"/>
    <property type="organism name" value="human"/>
</dbReference>
<dbReference type="AGR" id="HGNC:17079"/>
<dbReference type="CTD" id="23163"/>
<dbReference type="DisGeNET" id="23163"/>
<dbReference type="GeneCards" id="GGA3"/>
<dbReference type="HGNC" id="HGNC:17079">
    <property type="gene designation" value="GGA3"/>
</dbReference>
<dbReference type="HPA" id="ENSG00000125447">
    <property type="expression patterns" value="Low tissue specificity"/>
</dbReference>
<dbReference type="MIM" id="606006">
    <property type="type" value="gene"/>
</dbReference>
<dbReference type="neXtProt" id="NX_Q9NZ52"/>
<dbReference type="OpenTargets" id="ENSG00000125447"/>
<dbReference type="PharmGKB" id="PA28659"/>
<dbReference type="VEuPathDB" id="HostDB:ENSG00000125447"/>
<dbReference type="eggNOG" id="KOG1087">
    <property type="taxonomic scope" value="Eukaryota"/>
</dbReference>
<dbReference type="GeneTree" id="ENSGT00940000157333"/>
<dbReference type="HOGENOM" id="CLU_015010_0_0_1"/>
<dbReference type="InParanoid" id="Q9NZ52"/>
<dbReference type="OMA" id="CGDDFQD"/>
<dbReference type="OrthoDB" id="447025at2759"/>
<dbReference type="PAN-GO" id="Q9NZ52">
    <property type="GO annotations" value="4 GO annotations based on evolutionary models"/>
</dbReference>
<dbReference type="PhylomeDB" id="Q9NZ52"/>
<dbReference type="TreeFam" id="TF318574"/>
<dbReference type="PathwayCommons" id="Q9NZ52"/>
<dbReference type="Reactome" id="R-HSA-8854214">
    <property type="pathway name" value="TBC/RABGAPs"/>
</dbReference>
<dbReference type="Reactome" id="R-HSA-8875656">
    <property type="pathway name" value="MET receptor recycling"/>
</dbReference>
<dbReference type="Reactome" id="R-HSA-977225">
    <property type="pathway name" value="Amyloid fiber formation"/>
</dbReference>
<dbReference type="SignaLink" id="Q9NZ52"/>
<dbReference type="SIGNOR" id="Q9NZ52"/>
<dbReference type="BioGRID-ORCS" id="23163">
    <property type="hits" value="38 hits in 1152 CRISPR screens"/>
</dbReference>
<dbReference type="CD-CODE" id="FB4E32DD">
    <property type="entry name" value="Presynaptic clusters and postsynaptic densities"/>
</dbReference>
<dbReference type="ChiTaRS" id="GGA3">
    <property type="organism name" value="human"/>
</dbReference>
<dbReference type="EvolutionaryTrace" id="Q9NZ52"/>
<dbReference type="GeneWiki" id="GGA3"/>
<dbReference type="GenomeRNAi" id="23163"/>
<dbReference type="Pharos" id="Q9NZ52">
    <property type="development level" value="Tbio"/>
</dbReference>
<dbReference type="PRO" id="PR:Q9NZ52"/>
<dbReference type="Proteomes" id="UP000005640">
    <property type="component" value="Chromosome 17"/>
</dbReference>
<dbReference type="RNAct" id="Q9NZ52">
    <property type="molecule type" value="protein"/>
</dbReference>
<dbReference type="Bgee" id="ENSG00000125447">
    <property type="expression patterns" value="Expressed in sural nerve and 182 other cell types or tissues"/>
</dbReference>
<dbReference type="ExpressionAtlas" id="Q9NZ52">
    <property type="expression patterns" value="baseline and differential"/>
</dbReference>
<dbReference type="GO" id="GO:0031901">
    <property type="term" value="C:early endosome membrane"/>
    <property type="evidence" value="ECO:0000304"/>
    <property type="project" value="Reactome"/>
</dbReference>
<dbReference type="GO" id="GO:0010008">
    <property type="term" value="C:endosome membrane"/>
    <property type="evidence" value="ECO:0000304"/>
    <property type="project" value="Reactome"/>
</dbReference>
<dbReference type="GO" id="GO:0005794">
    <property type="term" value="C:Golgi apparatus"/>
    <property type="evidence" value="ECO:0000314"/>
    <property type="project" value="HPA"/>
</dbReference>
<dbReference type="GO" id="GO:0005764">
    <property type="term" value="C:lysosome"/>
    <property type="evidence" value="ECO:0000314"/>
    <property type="project" value="ARUK-UCL"/>
</dbReference>
<dbReference type="GO" id="GO:0032991">
    <property type="term" value="C:protein-containing complex"/>
    <property type="evidence" value="ECO:0000314"/>
    <property type="project" value="ARUK-UCL"/>
</dbReference>
<dbReference type="GO" id="GO:0055038">
    <property type="term" value="C:recycling endosome membrane"/>
    <property type="evidence" value="ECO:0000304"/>
    <property type="project" value="Reactome"/>
</dbReference>
<dbReference type="GO" id="GO:0005802">
    <property type="term" value="C:trans-Golgi network"/>
    <property type="evidence" value="ECO:0000314"/>
    <property type="project" value="UniProtKB"/>
</dbReference>
<dbReference type="GO" id="GO:0035091">
    <property type="term" value="F:phosphatidylinositol binding"/>
    <property type="evidence" value="ECO:0007669"/>
    <property type="project" value="InterPro"/>
</dbReference>
<dbReference type="GO" id="GO:0140318">
    <property type="term" value="F:protein transporter activity"/>
    <property type="evidence" value="ECO:0000314"/>
    <property type="project" value="ARUK-UCL"/>
</dbReference>
<dbReference type="GO" id="GO:0044877">
    <property type="term" value="F:protein-containing complex binding"/>
    <property type="evidence" value="ECO:0000314"/>
    <property type="project" value="ARUK-UCL"/>
</dbReference>
<dbReference type="GO" id="GO:0031267">
    <property type="term" value="F:small GTPase binding"/>
    <property type="evidence" value="ECO:0000314"/>
    <property type="project" value="UniProtKB"/>
</dbReference>
<dbReference type="GO" id="GO:0043130">
    <property type="term" value="F:ubiquitin binding"/>
    <property type="evidence" value="ECO:0000314"/>
    <property type="project" value="UniProtKB"/>
</dbReference>
<dbReference type="GO" id="GO:0032456">
    <property type="term" value="P:endocytic recycling"/>
    <property type="evidence" value="ECO:0007669"/>
    <property type="project" value="Ensembl"/>
</dbReference>
<dbReference type="GO" id="GO:0043001">
    <property type="term" value="P:Golgi to plasma membrane protein transport"/>
    <property type="evidence" value="ECO:0000315"/>
    <property type="project" value="UniProtKB"/>
</dbReference>
<dbReference type="GO" id="GO:0006893">
    <property type="term" value="P:Golgi to plasma membrane transport"/>
    <property type="evidence" value="ECO:0000318"/>
    <property type="project" value="GO_Central"/>
</dbReference>
<dbReference type="GO" id="GO:0006886">
    <property type="term" value="P:intracellular protein transport"/>
    <property type="evidence" value="ECO:0000303"/>
    <property type="project" value="UniProtKB"/>
</dbReference>
<dbReference type="GO" id="GO:1902430">
    <property type="term" value="P:negative regulation of amyloid-beta formation"/>
    <property type="evidence" value="ECO:0000314"/>
    <property type="project" value="UniProtKB"/>
</dbReference>
<dbReference type="GO" id="GO:1905167">
    <property type="term" value="P:positive regulation of lysosomal protein catabolic process"/>
    <property type="evidence" value="ECO:0000304"/>
    <property type="project" value="ARUK-UCL"/>
</dbReference>
<dbReference type="GO" id="GO:0030163">
    <property type="term" value="P:protein catabolic process"/>
    <property type="evidence" value="ECO:0007669"/>
    <property type="project" value="Ensembl"/>
</dbReference>
<dbReference type="GO" id="GO:0031648">
    <property type="term" value="P:protein destabilization"/>
    <property type="evidence" value="ECO:0000314"/>
    <property type="project" value="UniProtKB"/>
</dbReference>
<dbReference type="GO" id="GO:0034394">
    <property type="term" value="P:protein localization to cell surface"/>
    <property type="evidence" value="ECO:0000315"/>
    <property type="project" value="UniProtKB"/>
</dbReference>
<dbReference type="GO" id="GO:0006622">
    <property type="term" value="P:protein targeting to lysosome"/>
    <property type="evidence" value="ECO:0000353"/>
    <property type="project" value="ARUK-UCL"/>
</dbReference>
<dbReference type="GO" id="GO:0031647">
    <property type="term" value="P:regulation of protein stability"/>
    <property type="evidence" value="ECO:0000314"/>
    <property type="project" value="UniProtKB"/>
</dbReference>
<dbReference type="CDD" id="cd14240">
    <property type="entry name" value="GAT_GGA3"/>
    <property type="match status" value="1"/>
</dbReference>
<dbReference type="CDD" id="cd17008">
    <property type="entry name" value="VHS_GGA3"/>
    <property type="match status" value="1"/>
</dbReference>
<dbReference type="FunFam" id="2.60.40.1230:FF:000001">
    <property type="entry name" value="ADP-ribosylation factor-binding protein GGA1 isoform 1"/>
    <property type="match status" value="1"/>
</dbReference>
<dbReference type="FunFam" id="1.20.5.170:FF:000023">
    <property type="entry name" value="ADP-ribosylation factor-binding protein GGA3 isoform X1"/>
    <property type="match status" value="1"/>
</dbReference>
<dbReference type="FunFam" id="1.25.40.90:FF:000011">
    <property type="entry name" value="ADP-ribosylation factor-binding protein GGA3 isoform X1"/>
    <property type="match status" value="1"/>
</dbReference>
<dbReference type="Gene3D" id="1.20.5.170">
    <property type="match status" value="1"/>
</dbReference>
<dbReference type="Gene3D" id="1.20.58.160">
    <property type="match status" value="1"/>
</dbReference>
<dbReference type="Gene3D" id="1.25.40.90">
    <property type="match status" value="1"/>
</dbReference>
<dbReference type="Gene3D" id="2.60.40.1230">
    <property type="match status" value="1"/>
</dbReference>
<dbReference type="InterPro" id="IPR008152">
    <property type="entry name" value="Clathrin_a/b/g-adaptin_app_Ig"/>
</dbReference>
<dbReference type="InterPro" id="IPR013041">
    <property type="entry name" value="Clathrin_app_Ig-like_sf"/>
</dbReference>
<dbReference type="InterPro" id="IPR008942">
    <property type="entry name" value="ENTH_VHS"/>
</dbReference>
<dbReference type="InterPro" id="IPR008153">
    <property type="entry name" value="GAE_dom"/>
</dbReference>
<dbReference type="InterPro" id="IPR004152">
    <property type="entry name" value="GAT_dom"/>
</dbReference>
<dbReference type="InterPro" id="IPR044111">
    <property type="entry name" value="GAT_GGA3"/>
</dbReference>
<dbReference type="InterPro" id="IPR038425">
    <property type="entry name" value="GAT_sf"/>
</dbReference>
<dbReference type="InterPro" id="IPR027422">
    <property type="entry name" value="GGA1-3"/>
</dbReference>
<dbReference type="InterPro" id="IPR041198">
    <property type="entry name" value="GGA_N-GAT"/>
</dbReference>
<dbReference type="InterPro" id="IPR002014">
    <property type="entry name" value="VHS_dom"/>
</dbReference>
<dbReference type="InterPro" id="IPR046996">
    <property type="entry name" value="VHS_GGA3"/>
</dbReference>
<dbReference type="PANTHER" id="PTHR45905:SF3">
    <property type="entry name" value="ADP-RIBOSYLATION FACTOR-BINDING PROTEIN GGA3"/>
    <property type="match status" value="1"/>
</dbReference>
<dbReference type="PANTHER" id="PTHR45905">
    <property type="entry name" value="GOLGI-LOCALIZED, GAMMA-ADAPTIN EAR CONTAINING, ARF BINDING PROTEIN"/>
    <property type="match status" value="1"/>
</dbReference>
<dbReference type="Pfam" id="PF02883">
    <property type="entry name" value="Alpha_adaptinC2"/>
    <property type="match status" value="1"/>
</dbReference>
<dbReference type="Pfam" id="PF03127">
    <property type="entry name" value="GAT"/>
    <property type="match status" value="1"/>
</dbReference>
<dbReference type="Pfam" id="PF18308">
    <property type="entry name" value="GGA_N-GAT"/>
    <property type="match status" value="1"/>
</dbReference>
<dbReference type="Pfam" id="PF00790">
    <property type="entry name" value="VHS"/>
    <property type="match status" value="1"/>
</dbReference>
<dbReference type="SMART" id="SM00809">
    <property type="entry name" value="Alpha_adaptinC2"/>
    <property type="match status" value="1"/>
</dbReference>
<dbReference type="SMART" id="SM00288">
    <property type="entry name" value="VHS"/>
    <property type="match status" value="1"/>
</dbReference>
<dbReference type="SUPFAM" id="SSF49348">
    <property type="entry name" value="Clathrin adaptor appendage domain"/>
    <property type="match status" value="1"/>
</dbReference>
<dbReference type="SUPFAM" id="SSF48464">
    <property type="entry name" value="ENTH/VHS domain"/>
    <property type="match status" value="1"/>
</dbReference>
<dbReference type="SUPFAM" id="SSF89009">
    <property type="entry name" value="GAT-like domain"/>
    <property type="match status" value="1"/>
</dbReference>
<dbReference type="PROSITE" id="PS50180">
    <property type="entry name" value="GAE"/>
    <property type="match status" value="1"/>
</dbReference>
<dbReference type="PROSITE" id="PS50909">
    <property type="entry name" value="GAT"/>
    <property type="match status" value="1"/>
</dbReference>
<dbReference type="PROSITE" id="PS50179">
    <property type="entry name" value="VHS"/>
    <property type="match status" value="1"/>
</dbReference>
<feature type="chain" id="PRO_0000212684" description="ADP-ribosylation factor-binding protein GGA3">
    <location>
        <begin position="1"/>
        <end position="723"/>
    </location>
</feature>
<feature type="domain" description="VHS" evidence="4">
    <location>
        <begin position="16"/>
        <end position="146"/>
    </location>
</feature>
<feature type="domain" description="GAT" evidence="5">
    <location>
        <begin position="171"/>
        <end position="298"/>
    </location>
</feature>
<feature type="domain" description="GAE" evidence="3">
    <location>
        <begin position="594"/>
        <end position="715"/>
    </location>
</feature>
<feature type="region of interest" description="Binds to ARF1 (in long isoform)">
    <location>
        <begin position="1"/>
        <end position="313"/>
    </location>
</feature>
<feature type="region of interest" description="Unstructured hinge">
    <location>
        <begin position="299"/>
        <end position="593"/>
    </location>
</feature>
<feature type="region of interest" description="Disordered" evidence="6">
    <location>
        <begin position="339"/>
        <end position="384"/>
    </location>
</feature>
<feature type="region of interest" description="Disordered" evidence="6">
    <location>
        <begin position="428"/>
        <end position="464"/>
    </location>
</feature>
<feature type="short sequence motif" description="DXXLL" evidence="12">
    <location>
        <begin position="391"/>
        <end position="395"/>
    </location>
</feature>
<feature type="compositionally biased region" description="Pro residues" evidence="6">
    <location>
        <begin position="345"/>
        <end position="363"/>
    </location>
</feature>
<feature type="compositionally biased region" description="Low complexity" evidence="6">
    <location>
        <begin position="364"/>
        <end position="374"/>
    </location>
</feature>
<feature type="compositionally biased region" description="Low complexity" evidence="6">
    <location>
        <begin position="441"/>
        <end position="459"/>
    </location>
</feature>
<feature type="modified residue" description="Phosphoserine" evidence="37">
    <location>
        <position position="159"/>
    </location>
</feature>
<feature type="modified residue" description="Phosphoserine" evidence="37">
    <location>
        <position position="275"/>
    </location>
</feature>
<feature type="splice variant" id="VSP_045133" description="In isoform 3." evidence="30">
    <location>
        <begin position="1"/>
        <end position="122"/>
    </location>
</feature>
<feature type="splice variant" id="VSP_046868" description="In isoform 4." evidence="30">
    <location>
        <begin position="1"/>
        <end position="72"/>
    </location>
</feature>
<feature type="splice variant" id="VSP_001745" description="In isoform Short." evidence="28 29 31 32">
    <location>
        <begin position="68"/>
        <end position="100"/>
    </location>
</feature>
<feature type="splice variant" id="VSP_045134" description="In isoform 3." evidence="30">
    <original>EKVRLRYKLTFALGEQLSTEVGEVDQFPPVEQWGNL</original>
    <variation>KQVLSFLGKACLQPWGQAILLTTSCLA</variation>
    <location>
        <begin position="688"/>
        <end position="723"/>
    </location>
</feature>
<feature type="sequence variant" id="VAR_075715" description="In dbSNP:rs117805695." evidence="26">
    <original>K</original>
    <variation>R</variation>
    <location>
        <position position="132"/>
    </location>
</feature>
<feature type="sequence variant" id="VAR_075716" description="In dbSNP:rs146877619." evidence="26">
    <original>S</original>
    <variation>G</variation>
    <location>
        <position position="321"/>
    </location>
</feature>
<feature type="sequence variant" id="VAR_036524" description="In a breast cancer sample; somatic mutation; dbSNP:rs776324450." evidence="22">
    <original>P</original>
    <variation>L</variation>
    <location>
        <position position="574"/>
    </location>
</feature>
<feature type="mutagenesis site" description="No effect on regulation of BACE1 degradation." evidence="24">
    <original>N</original>
    <variation>A</variation>
    <location>
        <position position="91"/>
    </location>
</feature>
<feature type="mutagenesis site" description="Loss of interaction with ARF1 and Golgi localization." evidence="9">
    <original>N</original>
    <variation>A</variation>
    <location>
        <position position="194"/>
    </location>
</feature>
<feature type="mutagenesis site" description="Loss of interaction with ARF1 and Golgi localization." evidence="9">
    <original>S</original>
    <variation>P</variation>
    <location>
        <position position="199"/>
    </location>
</feature>
<feature type="mutagenesis site" description="Loss of interaction with ARF1 and Golgi localization." evidence="9">
    <original>T</original>
    <variation>P</variation>
    <location>
        <position position="217"/>
    </location>
</feature>
<feature type="mutagenesis site" description="Loss of UBC-binding and ubiquitination." evidence="17">
    <original>L</original>
    <variation>P</variation>
    <location>
        <position position="247"/>
    </location>
</feature>
<feature type="mutagenesis site" description="No effect. Confers an affinity to RABEP1 identical to GGA1; when associated with N-283." evidence="20">
    <original>K</original>
    <variation>M</variation>
    <location>
        <position position="258"/>
    </location>
</feature>
<feature type="mutagenesis site" description="Loss of UBC-binding and ubiquitination." evidence="17">
    <original>L</original>
    <variation>S</variation>
    <location>
        <position position="262"/>
    </location>
</feature>
<feature type="mutagenesis site" description="Loss of UBC-binding and ubiquitination. Abolishes binding to ubiquitin. Abolishes regulation of BACE1 degradation. No effect on interaction with NTRK1." evidence="17 19 24 25">
    <original>L</original>
    <variation>A</variation>
    <location>
        <position position="276"/>
    </location>
</feature>
<feature type="mutagenesis site" description="Loss of UBC-binding and ubiquitination." evidence="17 19">
    <original>L</original>
    <variation>S</variation>
    <location>
        <position position="276"/>
    </location>
</feature>
<feature type="mutagenesis site" description="Loss of UBC-binding and ubiquitination." evidence="17">
    <original>L</original>
    <variation>R</variation>
    <location>
        <position position="280"/>
    </location>
</feature>
<feature type="mutagenesis site" description="Can bind RABEP1. Confers an affinity to RABEP1 identical to GGA1; when associated with M-258." evidence="20">
    <original>S</original>
    <variation>N</variation>
    <location>
        <position position="283"/>
    </location>
</feature>
<feature type="mutagenesis site" description="Loss of UBC-binding and ubiquitination." evidence="17">
    <original>D</original>
    <variation>G</variation>
    <location>
        <position position="284"/>
    </location>
</feature>
<feature type="mutagenesis site" description="Loss of UBC-binding and ubiquitination." evidence="17">
    <original>Y</original>
    <variation>H</variation>
    <location>
        <position position="293"/>
    </location>
</feature>
<feature type="mutagenesis site" description="Acts as a dominant negative. Prevents proteolytic cleavage by CASP3; when associated with A-328, A-333 and A-428." evidence="23">
    <original>D</original>
    <variation>A</variation>
    <location>
        <position position="313"/>
    </location>
</feature>
<feature type="mutagenesis site" description="Prevents proteolytic cleavage by CASP3; when associated with A-313, A-333 and A-428." evidence="23">
    <original>D</original>
    <variation>A</variation>
    <location>
        <position position="328"/>
    </location>
</feature>
<feature type="mutagenesis site" description="Prevents proteolytic cleavage by CASP3; when associated with A-313, A-328 and A-428." evidence="23">
    <original>D</original>
    <variation>A</variation>
    <location>
        <position position="333"/>
    </location>
</feature>
<feature type="mutagenesis site" description="Increased binding to IGF2R." evidence="12">
    <original>DEELL</original>
    <variation>AAAAA</variation>
    <location>
        <begin position="391"/>
        <end position="395"/>
    </location>
</feature>
<feature type="mutagenesis site" description="Prevents proteolytic cleavage by CASP3; when associated with A-313, A-328 and A-333." evidence="23">
    <original>D</original>
    <variation>A</variation>
    <location>
        <position position="428"/>
    </location>
</feature>
<feature type="sequence conflict" description="In Ref. 7; AAH70044." evidence="33" ref="7">
    <original>Q</original>
    <variation>K</variation>
    <location>
        <position position="448"/>
    </location>
</feature>
<feature type="sequence conflict" description="In Ref. 4; BAH13665." evidence="33" ref="4">
    <original>F</original>
    <variation>S</variation>
    <location>
        <position position="562"/>
    </location>
</feature>
<feature type="helix" evidence="38">
    <location>
        <begin position="9"/>
        <end position="16"/>
    </location>
</feature>
<feature type="helix" evidence="38">
    <location>
        <begin position="26"/>
        <end position="38"/>
    </location>
</feature>
<feature type="helix" evidence="38">
    <location>
        <begin position="42"/>
        <end position="54"/>
    </location>
</feature>
<feature type="helix" evidence="38">
    <location>
        <begin position="59"/>
        <end position="75"/>
    </location>
</feature>
<feature type="helix" evidence="38">
    <location>
        <begin position="77"/>
        <end position="84"/>
    </location>
</feature>
<feature type="helix" evidence="38">
    <location>
        <begin position="87"/>
        <end position="97"/>
    </location>
</feature>
<feature type="helix" evidence="38">
    <location>
        <begin position="99"/>
        <end position="103"/>
    </location>
</feature>
<feature type="helix" evidence="38">
    <location>
        <begin position="108"/>
        <end position="124"/>
    </location>
</feature>
<feature type="helix" evidence="38">
    <location>
        <begin position="129"/>
        <end position="140"/>
    </location>
</feature>
<feature type="helix" evidence="40">
    <location>
        <begin position="218"/>
        <end position="231"/>
    </location>
</feature>
<feature type="turn" evidence="40">
    <location>
        <begin position="232"/>
        <end position="234"/>
    </location>
</feature>
<feature type="turn" evidence="40">
    <location>
        <begin position="237"/>
        <end position="239"/>
    </location>
</feature>
<feature type="helix" evidence="40">
    <location>
        <begin position="242"/>
        <end position="267"/>
    </location>
</feature>
<feature type="helix" evidence="40">
    <location>
        <begin position="276"/>
        <end position="290"/>
    </location>
</feature>
<feature type="helix" evidence="40">
    <location>
        <begin position="292"/>
        <end position="295"/>
    </location>
</feature>
<feature type="turn" evidence="40">
    <location>
        <begin position="296"/>
        <end position="298"/>
    </location>
</feature>
<feature type="helix" evidence="39">
    <location>
        <begin position="588"/>
        <end position="590"/>
    </location>
</feature>
<feature type="strand" evidence="39">
    <location>
        <begin position="599"/>
        <end position="604"/>
    </location>
</feature>
<feature type="strand" evidence="39">
    <location>
        <begin position="607"/>
        <end position="616"/>
    </location>
</feature>
<feature type="strand" evidence="39">
    <location>
        <begin position="624"/>
        <end position="633"/>
    </location>
</feature>
<feature type="strand" evidence="39">
    <location>
        <begin position="635"/>
        <end position="637"/>
    </location>
</feature>
<feature type="strand" evidence="39">
    <location>
        <begin position="639"/>
        <end position="647"/>
    </location>
</feature>
<feature type="strand" evidence="39">
    <location>
        <begin position="652"/>
        <end position="656"/>
    </location>
</feature>
<feature type="strand" evidence="39">
    <location>
        <begin position="675"/>
        <end position="683"/>
    </location>
</feature>
<feature type="strand" evidence="39">
    <location>
        <begin position="692"/>
        <end position="700"/>
    </location>
</feature>
<feature type="strand" evidence="39">
    <location>
        <begin position="703"/>
        <end position="711"/>
    </location>
</feature>
<feature type="helix" evidence="39">
    <location>
        <begin position="717"/>
        <end position="719"/>
    </location>
</feature>
<accession>Q9NZ52</accession>
<accession>B7Z7E2</accession>
<accession>B7Z7M9</accession>
<accession>J3KRN0</accession>
<accession>Q15017</accession>
<accession>Q6IS16</accession>
<accession>Q9UJY3</accession>
<protein>
    <recommendedName>
        <fullName evidence="33">ADP-ribosylation factor-binding protein GGA3</fullName>
    </recommendedName>
    <alternativeName>
        <fullName>Golgi-localized, gamma ear-containing, ARF-binding protein 3</fullName>
    </alternativeName>
</protein>
<evidence type="ECO:0000250" key="1"/>
<evidence type="ECO:0000250" key="2">
    <source>
        <dbReference type="UniProtKB" id="A0A0G2JV04"/>
    </source>
</evidence>
<evidence type="ECO:0000255" key="3">
    <source>
        <dbReference type="PROSITE-ProRule" id="PRU00093"/>
    </source>
</evidence>
<evidence type="ECO:0000255" key="4">
    <source>
        <dbReference type="PROSITE-ProRule" id="PRU00218"/>
    </source>
</evidence>
<evidence type="ECO:0000255" key="5">
    <source>
        <dbReference type="PROSITE-ProRule" id="PRU00373"/>
    </source>
</evidence>
<evidence type="ECO:0000256" key="6">
    <source>
        <dbReference type="SAM" id="MobiDB-lite"/>
    </source>
</evidence>
<evidence type="ECO:0000269" key="7">
    <source>
    </source>
</evidence>
<evidence type="ECO:0000269" key="8">
    <source>
    </source>
</evidence>
<evidence type="ECO:0000269" key="9">
    <source>
    </source>
</evidence>
<evidence type="ECO:0000269" key="10">
    <source>
    </source>
</evidence>
<evidence type="ECO:0000269" key="11">
    <source>
    </source>
</evidence>
<evidence type="ECO:0000269" key="12">
    <source>
    </source>
</evidence>
<evidence type="ECO:0000269" key="13">
    <source>
    </source>
</evidence>
<evidence type="ECO:0000269" key="14">
    <source>
    </source>
</evidence>
<evidence type="ECO:0000269" key="15">
    <source>
    </source>
</evidence>
<evidence type="ECO:0000269" key="16">
    <source>
    </source>
</evidence>
<evidence type="ECO:0000269" key="17">
    <source>
    </source>
</evidence>
<evidence type="ECO:0000269" key="18">
    <source>
    </source>
</evidence>
<evidence type="ECO:0000269" key="19">
    <source>
    </source>
</evidence>
<evidence type="ECO:0000269" key="20">
    <source>
    </source>
</evidence>
<evidence type="ECO:0000269" key="21">
    <source>
    </source>
</evidence>
<evidence type="ECO:0000269" key="22">
    <source>
    </source>
</evidence>
<evidence type="ECO:0000269" key="23">
    <source>
    </source>
</evidence>
<evidence type="ECO:0000269" key="24">
    <source>
    </source>
</evidence>
<evidence type="ECO:0000269" key="25">
    <source>
    </source>
</evidence>
<evidence type="ECO:0000269" key="26">
    <source>
    </source>
</evidence>
<evidence type="ECO:0000269" key="27">
    <source>
    </source>
</evidence>
<evidence type="ECO:0000303" key="28">
    <source>
    </source>
</evidence>
<evidence type="ECO:0000303" key="29">
    <source>
    </source>
</evidence>
<evidence type="ECO:0000303" key="30">
    <source>
    </source>
</evidence>
<evidence type="ECO:0000303" key="31">
    <source>
    </source>
</evidence>
<evidence type="ECO:0000303" key="32">
    <source>
    </source>
</evidence>
<evidence type="ECO:0000305" key="33"/>
<evidence type="ECO:0000305" key="34">
    <source>
    </source>
</evidence>
<evidence type="ECO:0000305" key="35">
    <source>
    </source>
</evidence>
<evidence type="ECO:0000312" key="36">
    <source>
        <dbReference type="MIM" id="606006"/>
    </source>
</evidence>
<evidence type="ECO:0007744" key="37">
    <source>
    </source>
</evidence>
<evidence type="ECO:0007829" key="38">
    <source>
        <dbReference type="PDB" id="1JUQ"/>
    </source>
</evidence>
<evidence type="ECO:0007829" key="39">
    <source>
        <dbReference type="PDB" id="1P4U"/>
    </source>
</evidence>
<evidence type="ECO:0007829" key="40">
    <source>
        <dbReference type="PDB" id="1WR6"/>
    </source>
</evidence>
<reference key="1">
    <citation type="journal article" date="2000" name="J. Cell Biol.">
        <title>GGAs: a family of ADP ribosylation factor-binding proteins related to adaptors and associated with the Golgi complex.</title>
        <authorList>
            <person name="Dell'Angelica E.C."/>
            <person name="Puertollano R."/>
            <person name="Mullins C."/>
            <person name="Aguilar R.C."/>
            <person name="Vargas J.D."/>
            <person name="Hartnell L.M."/>
            <person name="Bonifacino J.S."/>
        </authorList>
    </citation>
    <scope>NUCLEOTIDE SEQUENCE [MRNA] (ISOFORMS LONG AND SHORT)</scope>
    <source>
        <tissue>Heart</tissue>
    </source>
</reference>
<reference key="2">
    <citation type="journal article" date="2000" name="Mol. Biol. Cell">
        <title>A family of ADP-ribosylation factor effectors that can alter transport through the trans-Golgi.</title>
        <authorList>
            <person name="Boman A.L."/>
            <person name="Zhang C.-J."/>
            <person name="Zhu X."/>
            <person name="Kahn R.A."/>
        </authorList>
    </citation>
    <scope>NUCLEOTIDE SEQUENCE [MRNA] (ISOFORM SHORT)</scope>
    <scope>SUBCELLULAR LOCATION</scope>
</reference>
<reference key="3">
    <citation type="journal article" date="1995" name="DNA Res.">
        <title>Prediction of the coding sequences of unidentified human genes. IV. The coding sequences of 40 new genes (KIAA0121-KIAA0160) deduced by analysis of cDNA clones from human cell line KG-1.</title>
        <authorList>
            <person name="Nagase T."/>
            <person name="Seki N."/>
            <person name="Tanaka A."/>
            <person name="Ishikawa K."/>
            <person name="Nomura N."/>
        </authorList>
    </citation>
    <scope>NUCLEOTIDE SEQUENCE [LARGE SCALE MRNA] (ISOFORM SHORT)</scope>
    <source>
        <tissue>Bone marrow</tissue>
    </source>
</reference>
<reference key="4">
    <citation type="journal article" date="2004" name="Nat. Genet.">
        <title>Complete sequencing and characterization of 21,243 full-length human cDNAs.</title>
        <authorList>
            <person name="Ota T."/>
            <person name="Suzuki Y."/>
            <person name="Nishikawa T."/>
            <person name="Otsuki T."/>
            <person name="Sugiyama T."/>
            <person name="Irie R."/>
            <person name="Wakamatsu A."/>
            <person name="Hayashi K."/>
            <person name="Sato H."/>
            <person name="Nagai K."/>
            <person name="Kimura K."/>
            <person name="Makita H."/>
            <person name="Sekine M."/>
            <person name="Obayashi M."/>
            <person name="Nishi T."/>
            <person name="Shibahara T."/>
            <person name="Tanaka T."/>
            <person name="Ishii S."/>
            <person name="Yamamoto J."/>
            <person name="Saito K."/>
            <person name="Kawai Y."/>
            <person name="Isono Y."/>
            <person name="Nakamura Y."/>
            <person name="Nagahari K."/>
            <person name="Murakami K."/>
            <person name="Yasuda T."/>
            <person name="Iwayanagi T."/>
            <person name="Wagatsuma M."/>
            <person name="Shiratori A."/>
            <person name="Sudo H."/>
            <person name="Hosoiri T."/>
            <person name="Kaku Y."/>
            <person name="Kodaira H."/>
            <person name="Kondo H."/>
            <person name="Sugawara M."/>
            <person name="Takahashi M."/>
            <person name="Kanda K."/>
            <person name="Yokoi T."/>
            <person name="Furuya T."/>
            <person name="Kikkawa E."/>
            <person name="Omura Y."/>
            <person name="Abe K."/>
            <person name="Kamihara K."/>
            <person name="Katsuta N."/>
            <person name="Sato K."/>
            <person name="Tanikawa M."/>
            <person name="Yamazaki M."/>
            <person name="Ninomiya K."/>
            <person name="Ishibashi T."/>
            <person name="Yamashita H."/>
            <person name="Murakawa K."/>
            <person name="Fujimori K."/>
            <person name="Tanai H."/>
            <person name="Kimata M."/>
            <person name="Watanabe M."/>
            <person name="Hiraoka S."/>
            <person name="Chiba Y."/>
            <person name="Ishida S."/>
            <person name="Ono Y."/>
            <person name="Takiguchi S."/>
            <person name="Watanabe S."/>
            <person name="Yosida M."/>
            <person name="Hotuta T."/>
            <person name="Kusano J."/>
            <person name="Kanehori K."/>
            <person name="Takahashi-Fujii A."/>
            <person name="Hara H."/>
            <person name="Tanase T.-O."/>
            <person name="Nomura Y."/>
            <person name="Togiya S."/>
            <person name="Komai F."/>
            <person name="Hara R."/>
            <person name="Takeuchi K."/>
            <person name="Arita M."/>
            <person name="Imose N."/>
            <person name="Musashino K."/>
            <person name="Yuuki H."/>
            <person name="Oshima A."/>
            <person name="Sasaki N."/>
            <person name="Aotsuka S."/>
            <person name="Yoshikawa Y."/>
            <person name="Matsunawa H."/>
            <person name="Ichihara T."/>
            <person name="Shiohata N."/>
            <person name="Sano S."/>
            <person name="Moriya S."/>
            <person name="Momiyama H."/>
            <person name="Satoh N."/>
            <person name="Takami S."/>
            <person name="Terashima Y."/>
            <person name="Suzuki O."/>
            <person name="Nakagawa S."/>
            <person name="Senoh A."/>
            <person name="Mizoguchi H."/>
            <person name="Goto Y."/>
            <person name="Shimizu F."/>
            <person name="Wakebe H."/>
            <person name="Hishigaki H."/>
            <person name="Watanabe T."/>
            <person name="Sugiyama A."/>
            <person name="Takemoto M."/>
            <person name="Kawakami B."/>
            <person name="Yamazaki M."/>
            <person name="Watanabe K."/>
            <person name="Kumagai A."/>
            <person name="Itakura S."/>
            <person name="Fukuzumi Y."/>
            <person name="Fujimori Y."/>
            <person name="Komiyama M."/>
            <person name="Tashiro H."/>
            <person name="Tanigami A."/>
            <person name="Fujiwara T."/>
            <person name="Ono T."/>
            <person name="Yamada K."/>
            <person name="Fujii Y."/>
            <person name="Ozaki K."/>
            <person name="Hirao M."/>
            <person name="Ohmori Y."/>
            <person name="Kawabata A."/>
            <person name="Hikiji T."/>
            <person name="Kobatake N."/>
            <person name="Inagaki H."/>
            <person name="Ikema Y."/>
            <person name="Okamoto S."/>
            <person name="Okitani R."/>
            <person name="Kawakami T."/>
            <person name="Noguchi S."/>
            <person name="Itoh T."/>
            <person name="Shigeta K."/>
            <person name="Senba T."/>
            <person name="Matsumura K."/>
            <person name="Nakajima Y."/>
            <person name="Mizuno T."/>
            <person name="Morinaga M."/>
            <person name="Sasaki M."/>
            <person name="Togashi T."/>
            <person name="Oyama M."/>
            <person name="Hata H."/>
            <person name="Watanabe M."/>
            <person name="Komatsu T."/>
            <person name="Mizushima-Sugano J."/>
            <person name="Satoh T."/>
            <person name="Shirai Y."/>
            <person name="Takahashi Y."/>
            <person name="Nakagawa K."/>
            <person name="Okumura K."/>
            <person name="Nagase T."/>
            <person name="Nomura N."/>
            <person name="Kikuchi H."/>
            <person name="Masuho Y."/>
            <person name="Yamashita R."/>
            <person name="Nakai K."/>
            <person name="Yada T."/>
            <person name="Nakamura Y."/>
            <person name="Ohara O."/>
            <person name="Isogai T."/>
            <person name="Sugano S."/>
        </authorList>
    </citation>
    <scope>NUCLEOTIDE SEQUENCE [LARGE SCALE MRNA] (ISOFORMS 3 AND 4)</scope>
    <source>
        <tissue>Testis</tissue>
    </source>
</reference>
<reference key="5">
    <citation type="journal article" date="2006" name="Nature">
        <title>DNA sequence of human chromosome 17 and analysis of rearrangement in the human lineage.</title>
        <authorList>
            <person name="Zody M.C."/>
            <person name="Garber M."/>
            <person name="Adams D.J."/>
            <person name="Sharpe T."/>
            <person name="Harrow J."/>
            <person name="Lupski J.R."/>
            <person name="Nicholson C."/>
            <person name="Searle S.M."/>
            <person name="Wilming L."/>
            <person name="Young S.K."/>
            <person name="Abouelleil A."/>
            <person name="Allen N.R."/>
            <person name="Bi W."/>
            <person name="Bloom T."/>
            <person name="Borowsky M.L."/>
            <person name="Bugalter B.E."/>
            <person name="Butler J."/>
            <person name="Chang J.L."/>
            <person name="Chen C.-K."/>
            <person name="Cook A."/>
            <person name="Corum B."/>
            <person name="Cuomo C.A."/>
            <person name="de Jong P.J."/>
            <person name="DeCaprio D."/>
            <person name="Dewar K."/>
            <person name="FitzGerald M."/>
            <person name="Gilbert J."/>
            <person name="Gibson R."/>
            <person name="Gnerre S."/>
            <person name="Goldstein S."/>
            <person name="Grafham D.V."/>
            <person name="Grocock R."/>
            <person name="Hafez N."/>
            <person name="Hagopian D.S."/>
            <person name="Hart E."/>
            <person name="Norman C.H."/>
            <person name="Humphray S."/>
            <person name="Jaffe D.B."/>
            <person name="Jones M."/>
            <person name="Kamal M."/>
            <person name="Khodiyar V.K."/>
            <person name="LaButti K."/>
            <person name="Laird G."/>
            <person name="Lehoczky J."/>
            <person name="Liu X."/>
            <person name="Lokyitsang T."/>
            <person name="Loveland J."/>
            <person name="Lui A."/>
            <person name="Macdonald P."/>
            <person name="Major J.E."/>
            <person name="Matthews L."/>
            <person name="Mauceli E."/>
            <person name="McCarroll S.A."/>
            <person name="Mihalev A.H."/>
            <person name="Mudge J."/>
            <person name="Nguyen C."/>
            <person name="Nicol R."/>
            <person name="O'Leary S.B."/>
            <person name="Osoegawa K."/>
            <person name="Schwartz D.C."/>
            <person name="Shaw-Smith C."/>
            <person name="Stankiewicz P."/>
            <person name="Steward C."/>
            <person name="Swarbreck D."/>
            <person name="Venkataraman V."/>
            <person name="Whittaker C.A."/>
            <person name="Yang X."/>
            <person name="Zimmer A.R."/>
            <person name="Bradley A."/>
            <person name="Hubbard T."/>
            <person name="Birren B.W."/>
            <person name="Rogers J."/>
            <person name="Lander E.S."/>
            <person name="Nusbaum C."/>
        </authorList>
    </citation>
    <scope>NUCLEOTIDE SEQUENCE [LARGE SCALE GENOMIC DNA]</scope>
</reference>
<reference key="6">
    <citation type="submission" date="2005-07" db="EMBL/GenBank/DDBJ databases">
        <authorList>
            <person name="Mural R.J."/>
            <person name="Istrail S."/>
            <person name="Sutton G."/>
            <person name="Florea L."/>
            <person name="Halpern A.L."/>
            <person name="Mobarry C.M."/>
            <person name="Lippert R."/>
            <person name="Walenz B."/>
            <person name="Shatkay H."/>
            <person name="Dew I."/>
            <person name="Miller J.R."/>
            <person name="Flanigan M.J."/>
            <person name="Edwards N.J."/>
            <person name="Bolanos R."/>
            <person name="Fasulo D."/>
            <person name="Halldorsson B.V."/>
            <person name="Hannenhalli S."/>
            <person name="Turner R."/>
            <person name="Yooseph S."/>
            <person name="Lu F."/>
            <person name="Nusskern D.R."/>
            <person name="Shue B.C."/>
            <person name="Zheng X.H."/>
            <person name="Zhong F."/>
            <person name="Delcher A.L."/>
            <person name="Huson D.H."/>
            <person name="Kravitz S.A."/>
            <person name="Mouchard L."/>
            <person name="Reinert K."/>
            <person name="Remington K.A."/>
            <person name="Clark A.G."/>
            <person name="Waterman M.S."/>
            <person name="Eichler E.E."/>
            <person name="Adams M.D."/>
            <person name="Hunkapiller M.W."/>
            <person name="Myers E.W."/>
            <person name="Venter J.C."/>
        </authorList>
    </citation>
    <scope>NUCLEOTIDE SEQUENCE [LARGE SCALE GENOMIC DNA]</scope>
</reference>
<reference key="7">
    <citation type="journal article" date="2004" name="Genome Res.">
        <title>The status, quality, and expansion of the NIH full-length cDNA project: the Mammalian Gene Collection (MGC).</title>
        <authorList>
            <consortium name="The MGC Project Team"/>
        </authorList>
    </citation>
    <scope>NUCLEOTIDE SEQUENCE [LARGE SCALE MRNA] (ISOFORM SHORT)</scope>
    <source>
        <tissue>Brain</tissue>
    </source>
</reference>
<reference key="8">
    <citation type="journal article" date="2000" name="Biochem. Biophys. Res. Commun.">
        <title>Adaptor gamma ear homology domain conserved in gamma-adaptin and GGA proteins that interact with gamma-synergin.</title>
        <authorList>
            <person name="Takatsu H."/>
            <person name="Yoshino K."/>
            <person name="Nakayama K."/>
        </authorList>
    </citation>
    <scope>INTERACTION WITH SYNRG</scope>
</reference>
<reference key="9">
    <citation type="journal article" date="2001" name="Cell">
        <title>The GGAs promote ARF-dependent recruitment of clathrin to the TGN.</title>
        <authorList>
            <person name="Puertollano R."/>
            <person name="Randazzo P.A."/>
            <person name="Presley J.F."/>
            <person name="Hartnell L.M."/>
            <person name="Bonifacino J.S."/>
        </authorList>
    </citation>
    <scope>MUTAGENESIS OF ASN-194; SER-199 AND THR-217</scope>
    <scope>INTERACTION WITH ARF1 AND CLATHRIN</scope>
    <scope>FUNCTION</scope>
</reference>
<reference key="10">
    <citation type="journal article" date="2001" name="Science">
        <title>Sorting of mannose 6-phosphate receptors mediated by the GGAs.</title>
        <authorList>
            <person name="Puertollano R."/>
            <person name="Aguilar R.C."/>
            <person name="Gorshkova I."/>
            <person name="Crouch R.J."/>
            <person name="Bonifacino J.S."/>
        </authorList>
    </citation>
    <scope>INTERACTION WITH M6PR AND IGF2R</scope>
</reference>
<reference key="11">
    <citation type="journal article" date="2002" name="Biochem. J.">
        <title>GGA proteins associate with Golgi membranes through interaction between their GGAH domains and ADP-ribosylation factors.</title>
        <authorList>
            <person name="Takatsu H."/>
            <person name="Yoshino K."/>
            <person name="Toda K."/>
            <person name="Nakayama K."/>
        </authorList>
    </citation>
    <scope>INTERACTION WITH ARF1; ARF5 AND ARF6</scope>
    <scope>SUBCELLULAR LOCATION</scope>
</reference>
<reference key="12">
    <citation type="journal article" date="2002" name="J. Cell Biol.">
        <title>Enthoprotin: a novel clathrin-associated protein identified through subcellular proteomics.</title>
        <authorList>
            <person name="Wasiak S."/>
            <person name="Legendre-Guillemin V."/>
            <person name="Puertollano R."/>
            <person name="Blondeau F."/>
            <person name="Girard M."/>
            <person name="de Heuvel E."/>
            <person name="Boismenu D."/>
            <person name="Bell A.W."/>
            <person name="Bonifacino J.S."/>
            <person name="McPherson P.S."/>
        </authorList>
    </citation>
    <scope>INTERACTION WITH EPN4</scope>
</reference>
<reference key="13">
    <citation type="journal article" date="2002" name="Proc. Natl. Acad. Sci. U.S.A.">
        <title>Autoinhibition of the ligand-binding site of GGA1/3 VHS domains by an internal acidic cluster-dileucine motif.</title>
        <authorList>
            <person name="Doray B."/>
            <person name="Bruns K."/>
            <person name="Ghosh P."/>
            <person name="Kornfeld S.A."/>
        </authorList>
    </citation>
    <scope>MUTAGENESIS OF 391-ASP--LEU-395</scope>
    <scope>INTERACTION WITH IGF2R</scope>
    <scope>AUTOINHIBITION</scope>
</reference>
<reference key="14">
    <citation type="journal article" date="2003" name="Biochemistry">
        <title>Biochemical and structural characterization of the interaction of memapsin 2 (beta-secretase) cytosolic domain with the VHS domain of GGA proteins.</title>
        <authorList>
            <person name="He X."/>
            <person name="Zhu G."/>
            <person name="Koelsch G."/>
            <person name="Rodgers K.K."/>
            <person name="Zhang X.C."/>
            <person name="Tang J."/>
        </authorList>
    </citation>
    <scope>INTERACTION WITH BACE1</scope>
</reference>
<reference key="15">
    <citation type="journal article" date="2003" name="EMBO J.">
        <title>Divalent interaction of the GGAs with the Rabaptin-5-Rabex-5 complex.</title>
        <authorList>
            <person name="Mattera R."/>
            <person name="Arighi C.N."/>
            <person name="Lodge R."/>
            <person name="Zerial M."/>
            <person name="Bonifacino J.S."/>
        </authorList>
    </citation>
    <scope>INTERACTION WITH RABEP1 AND RABGEF1</scope>
</reference>
<reference key="16">
    <citation type="journal article" date="2003" name="J. Cell Biol.">
        <title>Mammalian GGAs act together to sort mannose 6-phosphate receptors.</title>
        <authorList>
            <person name="Ghosh P."/>
            <person name="Griffith J."/>
            <person name="Geuze H.J."/>
            <person name="Kornfeld S."/>
        </authorList>
    </citation>
    <scope>INTERACTION WITH GGA1 AND GGA2</scope>
</reference>
<reference key="17">
    <citation type="journal article" date="2004" name="J. Biol. Chem.">
        <title>GAT (GGA and Tom1) domain responsible for ubiquitin binding and ubiquitination.</title>
        <authorList>
            <person name="Shiba Y."/>
            <person name="Katoh Y."/>
            <person name="Shiba T."/>
            <person name="Yoshino K."/>
            <person name="Takatsu H."/>
            <person name="Kobayashi H."/>
            <person name="Shin H.-W."/>
            <person name="Wakatsuki S."/>
            <person name="Nakayama K."/>
        </authorList>
    </citation>
    <scope>MUTAGENESIS OF LEU-247; LEU-262; LEU-276; LEU-280; ASP-284 AND TYR-293</scope>
    <scope>INTERACTION WITH UBC</scope>
    <scope>UBIQUITINATION</scope>
</reference>
<reference key="18">
    <citation type="journal article" date="2004" name="J. Biol. Chem.">
        <title>Definition of the consensus motif recognized by gamma-adaptin ear domains.</title>
        <authorList>
            <person name="Mattera R."/>
            <person name="Ritter B."/>
            <person name="Sidhu S.S."/>
            <person name="McPherson P.S."/>
            <person name="Bonifacino J.S."/>
        </authorList>
    </citation>
    <scope>INTERACTION WITH NECAP1; NECAP2 AND AFTPH</scope>
</reference>
<reference key="19">
    <citation type="journal article" date="2004" name="J. Biol. Chem.">
        <title>The trihelical bundle subdomain of the GGA proteins interacts with multiple partners through overlapping but distinct sites.</title>
        <authorList>
            <person name="Mattera R."/>
            <person name="Puertollano R."/>
            <person name="Smith W.J."/>
            <person name="Bonifacino J.S."/>
        </authorList>
    </citation>
    <scope>MUTAGENESIS OF LYS-258 AND SER-283</scope>
    <scope>INTERACTION WITH RABEP1</scope>
</reference>
<reference key="20">
    <citation type="journal article" date="2004" name="Nat. Cell Biol.">
        <title>Interactions of GGA3 with the ubiquitin sorting machinery.</title>
        <authorList>
            <person name="Puertollano R."/>
            <person name="Bonifacino J.S."/>
        </authorList>
    </citation>
    <scope>SUBCELLULAR LOCATION</scope>
    <scope>MUTAGENESIS OF LEU-276</scope>
    <scope>INTERACTION WITH UBC AND TSG101</scope>
</reference>
<reference key="21">
    <citation type="journal article" date="2005" name="J. Biol. Chem.">
        <title>GGA proteins mediate the recycling pathway of memapsin 2 (BACE).</title>
        <authorList>
            <person name="He X."/>
            <person name="Li F."/>
            <person name="Chang W.P."/>
            <person name="Tang J."/>
        </authorList>
    </citation>
    <scope>FUNCTION</scope>
</reference>
<reference key="22">
    <citation type="journal article" date="2007" name="Neuron">
        <title>Depletion of GGA3 stabilizes BACE and enhances beta-secretase activity.</title>
        <authorList>
            <person name="Tesco G."/>
            <person name="Koh Y.H."/>
            <person name="Kang E.L."/>
            <person name="Cameron A.N."/>
            <person name="Das S."/>
            <person name="Sena-Esteves M."/>
            <person name="Hiltunen M."/>
            <person name="Yang S.H."/>
            <person name="Zhong Z."/>
            <person name="Shen Y."/>
            <person name="Simpkins J.W."/>
            <person name="Tanzi R.E."/>
        </authorList>
    </citation>
    <scope>FUNCTION</scope>
    <scope>PROTEOLYTIC CLEAVAGE</scope>
    <scope>MUTAGENESIS OF ASP-313; ASP-328; ASP-333 AND ASP-428</scope>
</reference>
<reference key="23">
    <citation type="journal article" date="2010" name="J. Biol. Chem.">
        <title>Ubiquitin regulates GGA3-mediated degradation of BACE1.</title>
        <authorList>
            <person name="Kang E.L."/>
            <person name="Cameron A.N."/>
            <person name="Piazza F."/>
            <person name="Walker K.R."/>
            <person name="Tesco G."/>
        </authorList>
    </citation>
    <scope>FUNCTION</scope>
    <scope>MUTAGENESIS OF ASN-91 AND LEU-276</scope>
</reference>
<reference key="24">
    <citation type="journal article" date="2011" name="BMC Syst. Biol.">
        <title>Initial characterization of the human central proteome.</title>
        <authorList>
            <person name="Burkard T.R."/>
            <person name="Planyavsky M."/>
            <person name="Kaupe I."/>
            <person name="Breitwieser F.P."/>
            <person name="Buerckstuemmer T."/>
            <person name="Bennett K.L."/>
            <person name="Superti-Furga G."/>
            <person name="Colinge J."/>
        </authorList>
    </citation>
    <scope>IDENTIFICATION BY MASS SPECTROMETRY [LARGE SCALE ANALYSIS]</scope>
</reference>
<reference key="25">
    <citation type="journal article" date="2014" name="J. Proteomics">
        <title>An enzyme assisted RP-RPLC approach for in-depth analysis of human liver phosphoproteome.</title>
        <authorList>
            <person name="Bian Y."/>
            <person name="Song C."/>
            <person name="Cheng K."/>
            <person name="Dong M."/>
            <person name="Wang F."/>
            <person name="Huang J."/>
            <person name="Sun D."/>
            <person name="Wang L."/>
            <person name="Ye M."/>
            <person name="Zou H."/>
        </authorList>
    </citation>
    <scope>PHOSPHORYLATION [LARGE SCALE ANALYSIS] AT SER-159 AND SER-275</scope>
    <scope>IDENTIFICATION BY MASS SPECTROMETRY [LARGE SCALE ANALYSIS]</scope>
    <source>
        <tissue>Liver</tissue>
    </source>
</reference>
<reference key="26">
    <citation type="journal article" date="2015" name="Mol. Biol. Cell">
        <title>GGA3 mediates TrkA endocytic recycling to promote sustained Akt phosphorylation and cell survival.</title>
        <authorList>
            <person name="Li X."/>
            <person name="Lavigne P."/>
            <person name="Lavoie C."/>
        </authorList>
    </citation>
    <scope>INTERACTION WITH NTRK1</scope>
    <scope>MUTAGENESIS OF LEU-276</scope>
</reference>
<reference key="27">
    <citation type="journal article" date="2016" name="Mol. Cell. Biol.">
        <title>GGA3 Interacts with a G Protein-Coupled Receptor and Modulates Its Cell Surface Export.</title>
        <authorList>
            <person name="Zhang M."/>
            <person name="Davis J.E."/>
            <person name="Li C."/>
            <person name="Gao J."/>
            <person name="Huang W."/>
            <person name="Lambert N.A."/>
            <person name="Terry A.V. Jr."/>
            <person name="Wu G."/>
        </authorList>
    </citation>
    <scope>FUNCTION</scope>
    <scope>INTERACTION WITH ADRA2B</scope>
</reference>
<reference key="28">
    <citation type="journal article" date="2002" name="Nat. Struct. Biol.">
        <title>Phosphoregulation of sorting signal-VHS domain interactions by a direct electrostatic mechanism.</title>
        <authorList>
            <person name="Kato Y."/>
            <person name="Misra S."/>
            <person name="Puertollano R."/>
            <person name="Hurley J.H."/>
            <person name="Bonifacino J.S."/>
        </authorList>
    </citation>
    <scope>X-RAY CRYSTALLOGRAPHY (2.3 ANGSTROMS) OF 1-166</scope>
</reference>
<reference key="29">
    <citation type="journal article" date="2006" name="Science">
        <title>The consensus coding sequences of human breast and colorectal cancers.</title>
        <authorList>
            <person name="Sjoeblom T."/>
            <person name="Jones S."/>
            <person name="Wood L.D."/>
            <person name="Parsons D.W."/>
            <person name="Lin J."/>
            <person name="Barber T.D."/>
            <person name="Mandelker D."/>
            <person name="Leary R.J."/>
            <person name="Ptak J."/>
            <person name="Silliman N."/>
            <person name="Szabo S."/>
            <person name="Buckhaults P."/>
            <person name="Farrell C."/>
            <person name="Meeh P."/>
            <person name="Markowitz S.D."/>
            <person name="Willis J."/>
            <person name="Dawson D."/>
            <person name="Willson J.K.V."/>
            <person name="Gazdar A.F."/>
            <person name="Hartigan J."/>
            <person name="Wu L."/>
            <person name="Liu C."/>
            <person name="Parmigiani G."/>
            <person name="Park B.H."/>
            <person name="Bachman K.E."/>
            <person name="Papadopoulos N."/>
            <person name="Vogelstein B."/>
            <person name="Kinzler K.W."/>
            <person name="Velculescu V.E."/>
        </authorList>
    </citation>
    <scope>VARIANT [LARGE SCALE ANALYSIS] LEU-574</scope>
</reference>
<reference key="30">
    <citation type="journal article" date="2015" name="Am. J. Hum. Genet.">
        <title>Joubert Syndrome in French Canadians and Identification of Mutations in CEP104.</title>
        <authorList>
            <consortium name="Care4Rare Canada Consortium"/>
            <person name="Srour M."/>
            <person name="Hamdan F.F."/>
            <person name="McKnight D."/>
            <person name="Davis E."/>
            <person name="Mandel H."/>
            <person name="Schwartzentruber J."/>
            <person name="Martin B."/>
            <person name="Patry L."/>
            <person name="Nassif C."/>
            <person name="Dionne-Laporte A."/>
            <person name="Ospina L.H."/>
            <person name="Lemyre E."/>
            <person name="Massicotte C."/>
            <person name="Laframboise R."/>
            <person name="Maranda B."/>
            <person name="Labuda D."/>
            <person name="Decarie J.C."/>
            <person name="Rypens F."/>
            <person name="Goldsher D."/>
            <person name="Fallet-Bianco C."/>
            <person name="Soucy J.F."/>
            <person name="Laberge A.M."/>
            <person name="Maftei C."/>
            <person name="Boycott K."/>
            <person name="Brais B."/>
            <person name="Boucher R.M."/>
            <person name="Rouleau G.A."/>
            <person name="Katsanis N."/>
            <person name="Majewski J."/>
            <person name="Elpeleg O."/>
            <person name="Kukolich M.K."/>
            <person name="Shalev S."/>
            <person name="Michaud J.L."/>
        </authorList>
    </citation>
    <scope>VARIANTS ARG-132 AND GLY-321</scope>
</reference>
<gene>
    <name evidence="36" type="primary">GGA3</name>
    <name type="synonym">KIAA0154</name>
</gene>
<proteinExistence type="evidence at protein level"/>
<comment type="function">
    <text evidence="2 9 21 23 24 27">Plays a role in protein sorting and trafficking between the trans-Golgi network (TGN) and endosomes. Mediates the ARF-dependent recruitment of clathrin to the TGN and binds ubiquitinated proteins and membrane cargo molecules with a cytosolic acidic cluster-dileucine (DXXLL) motif (PubMed:11301005). Mediates export of the GPCR receptor ADRA2B to the cell surface (PubMed:26811329). nvolved in BACE1 transport and sorting as well as regulation of BACE1 protein levels (PubMed:15615712, PubMed:17553422, PubMed:20484053). Regulates retrograde transport of BACE1 from endosomes to the trans-Golgi network via interaction through the VHS motif and dependent of BACE1 phosphorylation (PubMed:15615712). Modulates BACE1 protein levels independently of the interaction between VHS domain and DXXLL motif through recognition of ubiquitination (PubMed:20484053). Key player in a novel DXXLL-mediated endosomal sorting machinery to the recycling pathway that targets NTRK1 to the plasma membrane (By similarity).</text>
</comment>
<comment type="subunit">
    <text evidence="8 9 10 11 12 13 14 15 16 17 18 19 20 25 27 33">Monomer (Probable). Interacts with GGA1 and GGA2 (PubMed:14638859). Binds to clathrin and activated ARFs, such as ARF1, ARF5 and ARF6 (PubMed:11301005, PubMed:11950392). Binds RABEP1 and RABGEF1 (PubMed:12505986, PubMed:15143060). Interacts with the membrane proteins M6PR/CD-MPR and IGF2R/CI-MPR and the accessory proteins SYNRG, EPN4, NECAP1, NECAP2 and AFTPH/aftiphilin (PubMed:10814529, PubMed:11387475, PubMed:12060753, PubMed:12213833, PubMed:14665628). Interacts with TSG101 and UBC (PubMed:14660606, PubMed:15039775). Interacts with ADRA2B (PubMed:26811329). Interacts with NTRK1; the interaction is independent of NTRK1 activation and ubiquitination (PubMed:26446845). Interacts (via VHS domain) with BACE1 (via DXXLL motif) (PubMed:14567678).</text>
</comment>
<comment type="interaction">
    <interactant intactId="EBI-447404">
        <id>Q9NZ52</id>
    </interactant>
    <interactant intactId="EBI-638181">
        <id>P62330</id>
        <label>ARF6</label>
    </interactant>
    <organismsDiffer>false</organismsDiffer>
    <experiments>3</experiments>
</comment>
<comment type="interaction">
    <interactant intactId="EBI-447404">
        <id>Q9NZ52</id>
    </interactant>
    <interactant intactId="EBI-2433139">
        <id>P56817</id>
        <label>BACE1</label>
    </interactant>
    <organismsDiffer>false</organismsDiffer>
    <experiments>2</experiments>
</comment>
<comment type="interaction">
    <interactant intactId="EBI-447404">
        <id>Q9NZ52</id>
    </interactant>
    <interactant intactId="EBI-447141">
        <id>Q9UJY5</id>
        <label>GGA1</label>
    </interactant>
    <organismsDiffer>false</organismsDiffer>
    <experiments>4</experiments>
</comment>
<comment type="interaction">
    <interactant intactId="EBI-447404">
        <id>Q9NZ52</id>
    </interactant>
    <interactant intactId="EBI-447646">
        <id>Q9UJY4</id>
        <label>GGA2</label>
    </interactant>
    <organismsDiffer>false</organismsDiffer>
    <experiments>3</experiments>
</comment>
<comment type="interaction">
    <interactant intactId="EBI-447404">
        <id>Q9NZ52</id>
    </interactant>
    <interactant intactId="EBI-1048580">
        <id>P11717</id>
        <label>IGF2R</label>
    </interactant>
    <organismsDiffer>false</organismsDiffer>
    <experiments>8</experiments>
</comment>
<comment type="interaction">
    <interactant intactId="EBI-447404">
        <id>Q9NZ52</id>
    </interactant>
    <interactant intactId="EBI-2907262">
        <id>P20645</id>
        <label>M6PR</label>
    </interactant>
    <organismsDiffer>false</organismsDiffer>
    <experiments>2</experiments>
</comment>
<comment type="interaction">
    <interactant intactId="EBI-447404">
        <id>Q9NZ52</id>
    </interactant>
    <interactant intactId="EBI-2555014">
        <id>Q6VY07</id>
        <label>PACS1</label>
    </interactant>
    <organismsDiffer>false</organismsDiffer>
    <experiments>5</experiments>
</comment>
<comment type="interaction">
    <interactant intactId="EBI-447404">
        <id>Q9NZ52</id>
    </interactant>
    <interactant intactId="EBI-20731195">
        <id>Q13258</id>
        <label>PTGDR</label>
    </interactant>
    <organismsDiffer>false</organismsDiffer>
    <experiments>5</experiments>
</comment>
<comment type="interaction">
    <interactant intactId="EBI-447404">
        <id>Q9NZ52</id>
    </interactant>
    <interactant intactId="EBI-447043">
        <id>Q15276</id>
        <label>RABEP1</label>
    </interactant>
    <organismsDiffer>false</organismsDiffer>
    <experiments>12</experiments>
</comment>
<comment type="interaction">
    <interactant intactId="EBI-447404">
        <id>Q9NZ52</id>
    </interactant>
    <interactant intactId="EBI-413034">
        <id>P0CG47</id>
        <label>UBB</label>
    </interactant>
    <organismsDiffer>false</organismsDiffer>
    <experiments>2</experiments>
</comment>
<comment type="interaction">
    <interactant intactId="EBI-447404">
        <id>Q9NZ52</id>
    </interactant>
    <interactant intactId="EBI-9820219">
        <id>P18272</id>
        <label>NP</label>
    </interactant>
    <organismsDiffer>true</organismsDiffer>
    <experiments>2</experiments>
</comment>
<comment type="interaction">
    <interactant intactId="EBI-12075758">
        <id>Q9NZ52-2</id>
    </interactant>
    <interactant intactId="EBI-724310">
        <id>Q15038</id>
        <label>DAZAP2</label>
    </interactant>
    <organismsDiffer>false</organismsDiffer>
    <experiments>3</experiments>
</comment>
<comment type="interaction">
    <interactant intactId="EBI-12075758">
        <id>Q9NZ52-2</id>
    </interactant>
    <interactant intactId="EBI-725647">
        <id>Q99732</id>
        <label>LITAF</label>
    </interactant>
    <organismsDiffer>false</organismsDiffer>
    <experiments>3</experiments>
</comment>
<comment type="interaction">
    <interactant intactId="EBI-12075758">
        <id>Q9NZ52-2</id>
    </interactant>
    <interactant intactId="EBI-10181968">
        <id>Q7Z4N8</id>
        <label>P4HA3</label>
    </interactant>
    <organismsDiffer>false</organismsDiffer>
    <experiments>3</experiments>
</comment>
<comment type="interaction">
    <interactant intactId="EBI-12075758">
        <id>Q9NZ52-2</id>
    </interactant>
    <interactant intactId="EBI-373552">
        <id>Q96CS7</id>
        <label>PLEKHB2</label>
    </interactant>
    <organismsDiffer>false</organismsDiffer>
    <experiments>3</experiments>
</comment>
<comment type="interaction">
    <interactant intactId="EBI-12075758">
        <id>Q9NZ52-2</id>
    </interactant>
    <interactant intactId="EBI-8451480">
        <id>O75865-2</id>
        <label>TRAPPC6A</label>
    </interactant>
    <organismsDiffer>false</organismsDiffer>
    <experiments>3</experiments>
</comment>
<comment type="interaction">
    <interactant intactId="EBI-12075758">
        <id>Q9NZ52-2</id>
    </interactant>
    <interactant intactId="EBI-740098">
        <id>P36406</id>
        <label>TRIM23</label>
    </interactant>
    <organismsDiffer>false</organismsDiffer>
    <experiments>3</experiments>
</comment>
<comment type="interaction">
    <interactant intactId="EBI-12075758">
        <id>Q9NZ52-2</id>
    </interactant>
    <interactant intactId="EBI-742943">
        <id>Q96BW1</id>
        <label>UPRT</label>
    </interactant>
    <organismsDiffer>false</organismsDiffer>
    <experiments>3</experiments>
</comment>
<comment type="interaction">
    <interactant intactId="EBI-12075758">
        <id>Q9NZ52-2</id>
    </interactant>
    <interactant intactId="EBI-10486136">
        <id>Q6ZNH5</id>
        <label>ZNF497</label>
    </interactant>
    <organismsDiffer>false</organismsDiffer>
    <experiments>3</experiments>
</comment>
<comment type="subcellular location">
    <subcellularLocation>
        <location evidence="7 19">Golgi apparatus</location>
        <location evidence="7 19">trans-Golgi network membrane</location>
        <topology evidence="7 19">Peripheral membrane protein</topology>
    </subcellularLocation>
    <subcellularLocation>
        <location evidence="19">Endosome membrane</location>
        <topology evidence="19">Peripheral membrane protein</topology>
    </subcellularLocation>
    <subcellularLocation>
        <location evidence="11">Early endosome membrane</location>
        <topology evidence="33">Peripheral membrane protein</topology>
    </subcellularLocation>
    <subcellularLocation>
        <location evidence="2">Recycling endosome membrane</location>
        <topology evidence="33">Peripheral membrane protein</topology>
    </subcellularLocation>
</comment>
<comment type="alternative products">
    <event type="alternative splicing"/>
    <isoform>
        <id>Q9NZ52-1</id>
        <name>Long</name>
        <sequence type="displayed"/>
    </isoform>
    <isoform>
        <id>Q9NZ52-2</id>
        <name>Short</name>
        <sequence type="described" ref="VSP_001745"/>
    </isoform>
    <isoform>
        <id>Q9NZ52-3</id>
        <name>3</name>
        <sequence type="described" ref="VSP_045133 VSP_045134"/>
    </isoform>
    <isoform>
        <id>Q9NZ52-4</id>
        <name>4</name>
        <sequence type="described" ref="VSP_046868"/>
    </isoform>
</comment>
<comment type="tissue specificity">
    <text>Ubiquitously expressed.</text>
</comment>
<comment type="domain">
    <text evidence="34 35">The VHS domain functions as a recognition module for sorting signals composed of an acidic cluster followed by two leucines (DXXLL motif).</text>
</comment>
<comment type="domain">
    <text>The GAT domain is responsible for interaction with ARF-GTP, UBC and RABEP1. Required for recruitment to the TGN it prevents ARF-GTP hydrolysis.</text>
</comment>
<comment type="domain">
    <text>The unstructured hinge region contains clathrin-binding and an autoinhibitory (DXXLL) motifs.</text>
</comment>
<comment type="domain">
    <text>The GAE domain binds accessory proteins regulating GGAs function.</text>
</comment>
<comment type="PTM">
    <text evidence="1">Phosphorylated by CK2 and dephosphorylated by PP2A (By similarity). Phosphorylation of GGA3 allows the internal DXXLL motif to bind the VHS domain and to inhibit the recognition of cargo signals.</text>
</comment>
<comment type="PTM">
    <text evidence="17">Ubiquitinated.</text>
</comment>
<comment type="PTM">
    <text evidence="23">Proteolytically cleaved during apoptosis by CASP3.</text>
</comment>
<comment type="similarity">
    <text evidence="33">Belongs to the GGA protein family.</text>
</comment>
<comment type="sequence caution" evidence="33">
    <conflict type="erroneous initiation">
        <sequence resource="EMBL-CDS" id="BAA09926"/>
    </conflict>
    <text>Extended N-terminus.</text>
</comment>
<name>GGA3_HUMAN</name>
<organism>
    <name type="scientific">Homo sapiens</name>
    <name type="common">Human</name>
    <dbReference type="NCBI Taxonomy" id="9606"/>
    <lineage>
        <taxon>Eukaryota</taxon>
        <taxon>Metazoa</taxon>
        <taxon>Chordata</taxon>
        <taxon>Craniata</taxon>
        <taxon>Vertebrata</taxon>
        <taxon>Euteleostomi</taxon>
        <taxon>Mammalia</taxon>
        <taxon>Eutheria</taxon>
        <taxon>Euarchontoglires</taxon>
        <taxon>Primates</taxon>
        <taxon>Haplorrhini</taxon>
        <taxon>Catarrhini</taxon>
        <taxon>Hominidae</taxon>
        <taxon>Homo</taxon>
    </lineage>
</organism>
<keyword id="KW-0002">3D-structure</keyword>
<keyword id="KW-0025">Alternative splicing</keyword>
<keyword id="KW-0967">Endosome</keyword>
<keyword id="KW-0333">Golgi apparatus</keyword>
<keyword id="KW-0472">Membrane</keyword>
<keyword id="KW-0597">Phosphoprotein</keyword>
<keyword id="KW-0653">Protein transport</keyword>
<keyword id="KW-1267">Proteomics identification</keyword>
<keyword id="KW-1185">Reference proteome</keyword>
<keyword id="KW-0813">Transport</keyword>
<keyword id="KW-0832">Ubl conjugation</keyword>
<sequence length="723" mass="78315">MAEAEGESLESWLNKATNPSNRQEDWEYIIGFCDQINKELEGPQIAVRLLAHKIQSPQEWEALQALTVLEACMKNCGRRFHNEVGKFRFLNELIKVVSPKYLGDRVSEKVKTKVIELLYSWTMALPEEAKIKDAYHMLKRQGIVQSDPPIPVDRTLIPSPPPRPKNPVFDDEEKSKLLAKLLKSKNPDDLQEANKLIKSMVKEDEARIQKVTKRLHTLEEVNNNVRLLSEMLLHYSQEDSSDGDRELMKELFDQCENKRRTLFKLASETEDNDNSLGDILQASDNLSRVINSYKTIIEGQVINGEVATLTLPDSEGNSQCSNQGTLIDLAELDTTNSLSSVLAPAPTPPSSGIPILPPPPQASGPPRSRSSSQAEATLGPSSTSNALSWLDEELLCLGLADPAPNVPPKESAGNSQWHLLQREQSDLDFFSPRPGTAACGASDAPLLQPSAPSSSSSQAPLPPPFPAPVVPASVPAPSAGSSLFSTGVAPALAPKVEPAVPGHHGLALGNSALHHLDALDQLLEEAKVTSGLVKPTTSPLIPTTTPARPLLPFSTGPGSPLFQPLSFQSQGSPPKGPELSLASIHVPLESIKPSSALPVTAYDKNGFRILFHFAKECPPGRPDVLVVVVSMLNTAPLPVKSIVLQAAVPKSMKVKLQPPSGTELSPFSPIQPPAAITQVMLLANPLKEKVRLRYKLTFALGEQLSTEVGEVDQFPPVEQWGNL</sequence>